<gene>
    <name evidence="1" type="primary">atpD</name>
    <name type="ordered locus">BPEN_008</name>
</gene>
<accession>Q494C3</accession>
<sequence length="462" mass="50850">MSSGKIVQVIGAVVDVAFNQDVVPTVYHALEVHIDSFNKKLILEVAQQLGGGIVRCIAMGNTDGLRRGLVVINLKHSIEVPVGKETLGRVMNVLGEPIDMKGPIKEKEKWSIHRSAPLYSELSTDQDLLVTGIKVIDLMCPFSKGGKIGLFGGAGVGKTVNMMELIRNIAVEHSGYSVFVGVGERTREGNDFYNEMINSDVINKVALVYGQMNEPPGNRLRVALTGLTMAEKFRDEGHDVLLFIDNIYRYTLAGTEVSALLGRIPSAVGYQSTLSEEMGILQERITSTSLGSITSVQAVYVPADDLTDPSPATTFSHLDATIVLSRQIAALGIYPSVDPLDSNSQQLNPLIVGQEHYNVARDVKSILQRYQELKDIIAILGMDELSEEDKLIVLRSRKIQRFLSQPFFVAEVFTGFSGVYVSLRDTIQGFKEIIEGKYDHIPEQAFYMVGTIEEVIKKNKTL</sequence>
<organism>
    <name type="scientific">Blochmanniella pennsylvanica (strain BPEN)</name>
    <dbReference type="NCBI Taxonomy" id="291272"/>
    <lineage>
        <taxon>Bacteria</taxon>
        <taxon>Pseudomonadati</taxon>
        <taxon>Pseudomonadota</taxon>
        <taxon>Gammaproteobacteria</taxon>
        <taxon>Enterobacterales</taxon>
        <taxon>Enterobacteriaceae</taxon>
        <taxon>ant endosymbionts</taxon>
        <taxon>Candidatus Blochmanniella</taxon>
    </lineage>
</organism>
<evidence type="ECO:0000255" key="1">
    <source>
        <dbReference type="HAMAP-Rule" id="MF_01347"/>
    </source>
</evidence>
<comment type="function">
    <text evidence="1">Produces ATP from ADP in the presence of a proton gradient across the membrane. The catalytic sites are hosted primarily by the beta subunits.</text>
</comment>
<comment type="catalytic activity">
    <reaction evidence="1">
        <text>ATP + H2O + 4 H(+)(in) = ADP + phosphate + 5 H(+)(out)</text>
        <dbReference type="Rhea" id="RHEA:57720"/>
        <dbReference type="ChEBI" id="CHEBI:15377"/>
        <dbReference type="ChEBI" id="CHEBI:15378"/>
        <dbReference type="ChEBI" id="CHEBI:30616"/>
        <dbReference type="ChEBI" id="CHEBI:43474"/>
        <dbReference type="ChEBI" id="CHEBI:456216"/>
        <dbReference type="EC" id="7.1.2.2"/>
    </reaction>
</comment>
<comment type="subunit">
    <text evidence="1">F-type ATPases have 2 components, CF(1) - the catalytic core - and CF(0) - the membrane proton channel. CF(1) has five subunits: alpha(3), beta(3), gamma(1), delta(1), epsilon(1). CF(0) has three main subunits: a(1), b(2) and c(9-12). The alpha and beta chains form an alternating ring which encloses part of the gamma chain. CF(1) is attached to CF(0) by a central stalk formed by the gamma and epsilon chains, while a peripheral stalk is formed by the delta and b chains.</text>
</comment>
<comment type="subcellular location">
    <subcellularLocation>
        <location evidence="1">Cell inner membrane</location>
        <topology evidence="1">Peripheral membrane protein</topology>
    </subcellularLocation>
</comment>
<comment type="similarity">
    <text evidence="1">Belongs to the ATPase alpha/beta chains family.</text>
</comment>
<protein>
    <recommendedName>
        <fullName evidence="1">ATP synthase subunit beta</fullName>
        <ecNumber evidence="1">7.1.2.2</ecNumber>
    </recommendedName>
    <alternativeName>
        <fullName evidence="1">ATP synthase F1 sector subunit beta</fullName>
    </alternativeName>
    <alternativeName>
        <fullName evidence="1">F-ATPase subunit beta</fullName>
    </alternativeName>
</protein>
<dbReference type="EC" id="7.1.2.2" evidence="1"/>
<dbReference type="EMBL" id="CP000016">
    <property type="protein sequence ID" value="AAZ40658.1"/>
    <property type="molecule type" value="Genomic_DNA"/>
</dbReference>
<dbReference type="RefSeq" id="WP_011282564.1">
    <property type="nucleotide sequence ID" value="NC_007292.1"/>
</dbReference>
<dbReference type="SMR" id="Q494C3"/>
<dbReference type="STRING" id="291272.BPEN_008"/>
<dbReference type="KEGG" id="bpn:BPEN_008"/>
<dbReference type="eggNOG" id="COG0055">
    <property type="taxonomic scope" value="Bacteria"/>
</dbReference>
<dbReference type="HOGENOM" id="CLU_022398_0_2_6"/>
<dbReference type="OrthoDB" id="9801639at2"/>
<dbReference type="Proteomes" id="UP000007794">
    <property type="component" value="Chromosome"/>
</dbReference>
<dbReference type="GO" id="GO:0005886">
    <property type="term" value="C:plasma membrane"/>
    <property type="evidence" value="ECO:0007669"/>
    <property type="project" value="UniProtKB-SubCell"/>
</dbReference>
<dbReference type="GO" id="GO:0045259">
    <property type="term" value="C:proton-transporting ATP synthase complex"/>
    <property type="evidence" value="ECO:0007669"/>
    <property type="project" value="UniProtKB-KW"/>
</dbReference>
<dbReference type="GO" id="GO:0005524">
    <property type="term" value="F:ATP binding"/>
    <property type="evidence" value="ECO:0007669"/>
    <property type="project" value="UniProtKB-UniRule"/>
</dbReference>
<dbReference type="GO" id="GO:0016887">
    <property type="term" value="F:ATP hydrolysis activity"/>
    <property type="evidence" value="ECO:0007669"/>
    <property type="project" value="InterPro"/>
</dbReference>
<dbReference type="GO" id="GO:0046933">
    <property type="term" value="F:proton-transporting ATP synthase activity, rotational mechanism"/>
    <property type="evidence" value="ECO:0007669"/>
    <property type="project" value="UniProtKB-UniRule"/>
</dbReference>
<dbReference type="CDD" id="cd18110">
    <property type="entry name" value="ATP-synt_F1_beta_C"/>
    <property type="match status" value="1"/>
</dbReference>
<dbReference type="CDD" id="cd18115">
    <property type="entry name" value="ATP-synt_F1_beta_N"/>
    <property type="match status" value="1"/>
</dbReference>
<dbReference type="CDD" id="cd01133">
    <property type="entry name" value="F1-ATPase_beta_CD"/>
    <property type="match status" value="1"/>
</dbReference>
<dbReference type="FunFam" id="1.10.1140.10:FF:000001">
    <property type="entry name" value="ATP synthase subunit beta"/>
    <property type="match status" value="1"/>
</dbReference>
<dbReference type="FunFam" id="3.40.50.300:FF:000004">
    <property type="entry name" value="ATP synthase subunit beta"/>
    <property type="match status" value="1"/>
</dbReference>
<dbReference type="Gene3D" id="2.40.10.170">
    <property type="match status" value="1"/>
</dbReference>
<dbReference type="Gene3D" id="1.10.1140.10">
    <property type="entry name" value="Bovine Mitochondrial F1-atpase, Atp Synthase Beta Chain, Chain D, domain 3"/>
    <property type="match status" value="1"/>
</dbReference>
<dbReference type="Gene3D" id="3.40.50.300">
    <property type="entry name" value="P-loop containing nucleotide triphosphate hydrolases"/>
    <property type="match status" value="1"/>
</dbReference>
<dbReference type="HAMAP" id="MF_01347">
    <property type="entry name" value="ATP_synth_beta_bact"/>
    <property type="match status" value="1"/>
</dbReference>
<dbReference type="InterPro" id="IPR003593">
    <property type="entry name" value="AAA+_ATPase"/>
</dbReference>
<dbReference type="InterPro" id="IPR055190">
    <property type="entry name" value="ATP-synt_VA_C"/>
</dbReference>
<dbReference type="InterPro" id="IPR005722">
    <property type="entry name" value="ATP_synth_F1_bsu"/>
</dbReference>
<dbReference type="InterPro" id="IPR020003">
    <property type="entry name" value="ATPase_a/bsu_AS"/>
</dbReference>
<dbReference type="InterPro" id="IPR050053">
    <property type="entry name" value="ATPase_alpha/beta_chains"/>
</dbReference>
<dbReference type="InterPro" id="IPR004100">
    <property type="entry name" value="ATPase_F1/V1/A1_a/bsu_N"/>
</dbReference>
<dbReference type="InterPro" id="IPR036121">
    <property type="entry name" value="ATPase_F1/V1/A1_a/bsu_N_sf"/>
</dbReference>
<dbReference type="InterPro" id="IPR000194">
    <property type="entry name" value="ATPase_F1/V1/A1_a/bsu_nucl-bd"/>
</dbReference>
<dbReference type="InterPro" id="IPR024034">
    <property type="entry name" value="ATPase_F1/V1_b/a_C"/>
</dbReference>
<dbReference type="InterPro" id="IPR027417">
    <property type="entry name" value="P-loop_NTPase"/>
</dbReference>
<dbReference type="NCBIfam" id="TIGR01039">
    <property type="entry name" value="atpD"/>
    <property type="match status" value="1"/>
</dbReference>
<dbReference type="PANTHER" id="PTHR15184">
    <property type="entry name" value="ATP SYNTHASE"/>
    <property type="match status" value="1"/>
</dbReference>
<dbReference type="PANTHER" id="PTHR15184:SF71">
    <property type="entry name" value="ATP SYNTHASE SUBUNIT BETA, MITOCHONDRIAL"/>
    <property type="match status" value="1"/>
</dbReference>
<dbReference type="Pfam" id="PF00006">
    <property type="entry name" value="ATP-synt_ab"/>
    <property type="match status" value="1"/>
</dbReference>
<dbReference type="Pfam" id="PF02874">
    <property type="entry name" value="ATP-synt_ab_N"/>
    <property type="match status" value="1"/>
</dbReference>
<dbReference type="Pfam" id="PF22919">
    <property type="entry name" value="ATP-synt_VA_C"/>
    <property type="match status" value="1"/>
</dbReference>
<dbReference type="SMART" id="SM00382">
    <property type="entry name" value="AAA"/>
    <property type="match status" value="1"/>
</dbReference>
<dbReference type="SUPFAM" id="SSF47917">
    <property type="entry name" value="C-terminal domain of alpha and beta subunits of F1 ATP synthase"/>
    <property type="match status" value="1"/>
</dbReference>
<dbReference type="SUPFAM" id="SSF50615">
    <property type="entry name" value="N-terminal domain of alpha and beta subunits of F1 ATP synthase"/>
    <property type="match status" value="1"/>
</dbReference>
<dbReference type="SUPFAM" id="SSF52540">
    <property type="entry name" value="P-loop containing nucleoside triphosphate hydrolases"/>
    <property type="match status" value="1"/>
</dbReference>
<dbReference type="PROSITE" id="PS00152">
    <property type="entry name" value="ATPASE_ALPHA_BETA"/>
    <property type="match status" value="1"/>
</dbReference>
<reference key="1">
    <citation type="journal article" date="2005" name="Genome Res.">
        <title>Genome sequence of Blochmannia pennsylvanicus indicates parallel evolutionary trends among bacterial mutualists of insects.</title>
        <authorList>
            <person name="Degnan P.H."/>
            <person name="Lazarus A.B."/>
            <person name="Wernegreen J.J."/>
        </authorList>
    </citation>
    <scope>NUCLEOTIDE SEQUENCE [LARGE SCALE GENOMIC DNA]</scope>
    <source>
        <strain>BPEN</strain>
    </source>
</reference>
<feature type="chain" id="PRO_0000254220" description="ATP synthase subunit beta">
    <location>
        <begin position="1"/>
        <end position="462"/>
    </location>
</feature>
<feature type="binding site" evidence="1">
    <location>
        <begin position="152"/>
        <end position="159"/>
    </location>
    <ligand>
        <name>ATP</name>
        <dbReference type="ChEBI" id="CHEBI:30616"/>
    </ligand>
</feature>
<proteinExistence type="inferred from homology"/>
<name>ATPB_BLOPB</name>
<keyword id="KW-0066">ATP synthesis</keyword>
<keyword id="KW-0067">ATP-binding</keyword>
<keyword id="KW-0997">Cell inner membrane</keyword>
<keyword id="KW-1003">Cell membrane</keyword>
<keyword id="KW-0139">CF(1)</keyword>
<keyword id="KW-0375">Hydrogen ion transport</keyword>
<keyword id="KW-0406">Ion transport</keyword>
<keyword id="KW-0472">Membrane</keyword>
<keyword id="KW-0547">Nucleotide-binding</keyword>
<keyword id="KW-1185">Reference proteome</keyword>
<keyword id="KW-1278">Translocase</keyword>
<keyword id="KW-0813">Transport</keyword>